<proteinExistence type="evidence at protein level"/>
<organism>
    <name type="scientific">Methylosinus trichosporium</name>
    <dbReference type="NCBI Taxonomy" id="426"/>
    <lineage>
        <taxon>Bacteria</taxon>
        <taxon>Pseudomonadati</taxon>
        <taxon>Pseudomonadota</taxon>
        <taxon>Alphaproteobacteria</taxon>
        <taxon>Hyphomicrobiales</taxon>
        <taxon>Methylocystaceae</taxon>
        <taxon>Methylosinus</taxon>
    </lineage>
</organism>
<sequence length="138" mass="14883">MSSAHNAYNAGIMQKTGKAFADEFFAEENQVVHESNAVVLVLMKSDEIDAIIEDIVLKGGKAKNPSIVVEDKAGFWWIKADGAIEIDAAEAGELLGKPFSVYDLLINVSSTVGRAYTLGTKFTITSELMGLDRALTDI</sequence>
<protein>
    <recommendedName>
        <fullName>Methane monooxygenase regulatory protein B</fullName>
    </recommendedName>
</protein>
<comment type="function">
    <text>The B protein acts as a regulator of electron flow through the soluble mmo complex, switching the enzyme from an oxidase to a hydroxylase in the presence of the substrate.</text>
</comment>
<comment type="subunit">
    <text>The soluble methane monooxygenase (sMMO) consists of four components A/MMOH (composed of alpha/MmoX, beta/MmoY and gamma/MmoZ), B/MMOB (MmoB), C/MMOR (MmoC) and D/MMOD (MmoD).</text>
</comment>
<comment type="similarity">
    <text evidence="2">Belongs to the TmoD/XamoD family.</text>
</comment>
<feature type="initiator methionine" description="Removed" evidence="1">
    <location>
        <position position="1"/>
    </location>
</feature>
<feature type="chain" id="PRO_0000096508" description="Methane monooxygenase regulatory protein B">
    <location>
        <begin position="2"/>
        <end position="138"/>
    </location>
</feature>
<feature type="helix" evidence="4">
    <location>
        <begin position="4"/>
        <end position="6"/>
    </location>
</feature>
<feature type="helix" evidence="4">
    <location>
        <begin position="11"/>
        <end position="14"/>
    </location>
</feature>
<feature type="helix" evidence="4">
    <location>
        <begin position="17"/>
        <end position="24"/>
    </location>
</feature>
<feature type="helix" evidence="4">
    <location>
        <begin position="27"/>
        <end position="30"/>
    </location>
</feature>
<feature type="strand" evidence="4">
    <location>
        <begin position="37"/>
        <end position="43"/>
    </location>
</feature>
<feature type="helix" evidence="4">
    <location>
        <begin position="46"/>
        <end position="54"/>
    </location>
</feature>
<feature type="turn" evidence="4">
    <location>
        <begin position="55"/>
        <end position="58"/>
    </location>
</feature>
<feature type="helix" evidence="4">
    <location>
        <begin position="59"/>
        <end position="63"/>
    </location>
</feature>
<feature type="strand" evidence="4">
    <location>
        <begin position="68"/>
        <end position="71"/>
    </location>
</feature>
<feature type="strand" evidence="4">
    <location>
        <begin position="73"/>
        <end position="87"/>
    </location>
</feature>
<feature type="helix" evidence="4">
    <location>
        <begin position="88"/>
        <end position="95"/>
    </location>
</feature>
<feature type="helix" evidence="4">
    <location>
        <begin position="101"/>
        <end position="104"/>
    </location>
</feature>
<feature type="helix" evidence="4">
    <location>
        <begin position="105"/>
        <end position="107"/>
    </location>
</feature>
<feature type="strand" evidence="4">
    <location>
        <begin position="108"/>
        <end position="118"/>
    </location>
</feature>
<feature type="strand" evidence="4">
    <location>
        <begin position="121"/>
        <end position="126"/>
    </location>
</feature>
<feature type="turn" evidence="3">
    <location>
        <begin position="129"/>
        <end position="131"/>
    </location>
</feature>
<accession>P27356</accession>
<keyword id="KW-0002">3D-structure</keyword>
<keyword id="KW-0903">Direct protein sequencing</keyword>
<keyword id="KW-0503">Monooxygenase</keyword>
<keyword id="KW-0560">Oxidoreductase</keyword>
<evidence type="ECO:0000269" key="1">
    <source>
    </source>
</evidence>
<evidence type="ECO:0000305" key="2"/>
<evidence type="ECO:0007829" key="3">
    <source>
        <dbReference type="PDB" id="6VK5"/>
    </source>
</evidence>
<evidence type="ECO:0007829" key="4">
    <source>
        <dbReference type="PDB" id="7S6T"/>
    </source>
</evidence>
<name>MMOB_METTR</name>
<gene>
    <name type="primary">mmoB</name>
</gene>
<dbReference type="EMBL" id="X55394">
    <property type="protein sequence ID" value="CAA39070.1"/>
    <property type="molecule type" value="Genomic_DNA"/>
</dbReference>
<dbReference type="PIR" id="S15209">
    <property type="entry name" value="D39049"/>
</dbReference>
<dbReference type="PDB" id="2MOB">
    <property type="method" value="NMR"/>
    <property type="chains" value="A=1-138"/>
</dbReference>
<dbReference type="PDB" id="6VK4">
    <property type="method" value="X-ray"/>
    <property type="resolution" value="2.35 A"/>
    <property type="chains" value="D/H=1-138"/>
</dbReference>
<dbReference type="PDB" id="6VK5">
    <property type="method" value="X-ray"/>
    <property type="resolution" value="1.86 A"/>
    <property type="chains" value="D/H=1-138"/>
</dbReference>
<dbReference type="PDB" id="6VK8">
    <property type="method" value="X-ray"/>
    <property type="resolution" value="2.03 A"/>
    <property type="chains" value="D/H=1-138"/>
</dbReference>
<dbReference type="PDB" id="6YD0">
    <property type="method" value="X-ray"/>
    <property type="resolution" value="1.95 A"/>
    <property type="chains" value="G=1-138"/>
</dbReference>
<dbReference type="PDB" id="6YDI">
    <property type="method" value="X-ray"/>
    <property type="resolution" value="1.95 A"/>
    <property type="chains" value="G=1-138"/>
</dbReference>
<dbReference type="PDB" id="6YDU">
    <property type="method" value="X-ray"/>
    <property type="resolution" value="1.95 A"/>
    <property type="chains" value="G=1-138"/>
</dbReference>
<dbReference type="PDB" id="6YY3">
    <property type="method" value="X-ray"/>
    <property type="resolution" value="2.00 A"/>
    <property type="chains" value="G=1-138"/>
</dbReference>
<dbReference type="PDB" id="7M8Q">
    <property type="method" value="X-ray"/>
    <property type="resolution" value="2.08 A"/>
    <property type="chains" value="D/H=2-138"/>
</dbReference>
<dbReference type="PDB" id="7M8R">
    <property type="method" value="X-ray"/>
    <property type="resolution" value="2.22 A"/>
    <property type="chains" value="D/H=3-138"/>
</dbReference>
<dbReference type="PDB" id="7S6Q">
    <property type="method" value="X-ray"/>
    <property type="resolution" value="1.96 A"/>
    <property type="chains" value="D/H=3-133"/>
</dbReference>
<dbReference type="PDB" id="7S6T">
    <property type="method" value="X-ray"/>
    <property type="resolution" value="1.82 A"/>
    <property type="chains" value="D/H=3-138"/>
</dbReference>
<dbReference type="PDB" id="7S7H">
    <property type="method" value="X-ray"/>
    <property type="resolution" value="2.40 A"/>
    <property type="chains" value="D/H=3-133"/>
</dbReference>
<dbReference type="PDBsum" id="2MOB"/>
<dbReference type="PDBsum" id="6VK4"/>
<dbReference type="PDBsum" id="6VK5"/>
<dbReference type="PDBsum" id="6VK8"/>
<dbReference type="PDBsum" id="6YD0"/>
<dbReference type="PDBsum" id="6YDI"/>
<dbReference type="PDBsum" id="6YDU"/>
<dbReference type="PDBsum" id="6YY3"/>
<dbReference type="PDBsum" id="7M8Q"/>
<dbReference type="PDBsum" id="7M8R"/>
<dbReference type="PDBsum" id="7S6Q"/>
<dbReference type="PDBsum" id="7S6T"/>
<dbReference type="PDBsum" id="7S7H"/>
<dbReference type="BMRB" id="P27356"/>
<dbReference type="SMR" id="P27356"/>
<dbReference type="BioCyc" id="MetaCyc:MONOMER-3871"/>
<dbReference type="BRENDA" id="1.14.13.25">
    <property type="organism ID" value="3322"/>
</dbReference>
<dbReference type="SABIO-RK" id="P27356"/>
<dbReference type="EvolutionaryTrace" id="P27356"/>
<dbReference type="GO" id="GO:0004497">
    <property type="term" value="F:monooxygenase activity"/>
    <property type="evidence" value="ECO:0007669"/>
    <property type="project" value="UniProtKB-KW"/>
</dbReference>
<dbReference type="DisProt" id="DP00992"/>
<dbReference type="Gene3D" id="3.90.56.10">
    <property type="entry name" value="Monooxygenase component MmoB/DmpM"/>
    <property type="match status" value="1"/>
</dbReference>
<dbReference type="InterPro" id="IPR054955">
    <property type="entry name" value="MethMoxRegMmoB"/>
</dbReference>
<dbReference type="InterPro" id="IPR003454">
    <property type="entry name" value="MOase_MmoB_DmpM"/>
</dbReference>
<dbReference type="InterPro" id="IPR036889">
    <property type="entry name" value="mOase_MmoB_DmpM_sf"/>
</dbReference>
<dbReference type="NCBIfam" id="NF045804">
    <property type="entry name" value="MethMoxRegMmoB"/>
    <property type="match status" value="1"/>
</dbReference>
<dbReference type="Pfam" id="PF02406">
    <property type="entry name" value="MmoB_DmpM"/>
    <property type="match status" value="1"/>
</dbReference>
<dbReference type="SUPFAM" id="SSF56029">
    <property type="entry name" value="Monooxygenase (hydroxylase) regulatory protein"/>
    <property type="match status" value="1"/>
</dbReference>
<reference key="1">
    <citation type="journal article" date="1991" name="Mol. Microbiol.">
        <title>Molecular analysis of the methane monooxygenase (MMO) gene cluster of Methylosinus trichosporium OB3b.</title>
        <authorList>
            <person name="Cardy D.L.N."/>
            <person name="Laidler V."/>
            <person name="Salmond G.P.C."/>
            <person name="Murrell J.C."/>
        </authorList>
    </citation>
    <scope>NUCLEOTIDE SEQUENCE [GENOMIC DNA]</scope>
    <source>
        <strain>ATCC 35070 / NCIMB 11131 / ACM 3311 / OB3b</strain>
    </source>
</reference>
<reference key="2">
    <citation type="journal article" date="1991" name="J. Biol. Chem.">
        <title>Complex formation between the protein components of methane monooxygenase from Methylosinus trichosporium OB3b. Identification of sites of component interaction.</title>
        <authorList>
            <person name="Fox B.G."/>
            <person name="Liu Y."/>
            <person name="Dege J.E."/>
            <person name="Lipscomb J.D."/>
        </authorList>
    </citation>
    <scope>PROTEIN SEQUENCE OF 2-17</scope>
</reference>
<reference key="3">
    <citation type="journal article" date="1999" name="Biochemistry">
        <title>Solution structure of component B from methane monooxygenase derived through heteronuclear NMR and molecular modeling.</title>
        <authorList>
            <person name="Chang S.-L."/>
            <person name="Wallar B.J."/>
            <person name="Lipscomb J.D."/>
            <person name="Mayo K.H."/>
        </authorList>
    </citation>
    <scope>STRUCTURE BY NMR</scope>
</reference>